<feature type="chain" id="PRO_0000200046" description="Homeobox protein Hox-A3a">
    <location>
        <begin position="1"/>
        <end position="410"/>
    </location>
</feature>
<feature type="DNA-binding region" description="Homeobox" evidence="2">
    <location>
        <begin position="163"/>
        <end position="222"/>
    </location>
</feature>
<feature type="region of interest" description="Disordered" evidence="3">
    <location>
        <begin position="79"/>
        <end position="126"/>
    </location>
</feature>
<feature type="region of interest" description="Disordered" evidence="3">
    <location>
        <begin position="222"/>
        <end position="249"/>
    </location>
</feature>
<feature type="short sequence motif" description="Antp-type hexapeptide">
    <location>
        <begin position="127"/>
        <end position="132"/>
    </location>
</feature>
<feature type="sequence conflict" description="In Ref. 1; AAD15938." evidence="4" ref="1">
    <original>D</original>
    <variation>RQ</variation>
    <location>
        <position position="154"/>
    </location>
</feature>
<feature type="sequence conflict" description="In Ref. 1; AAD15938." evidence="4" ref="1">
    <original>AS</original>
    <variation>HL</variation>
    <location>
        <begin position="273"/>
        <end position="274"/>
    </location>
</feature>
<organism>
    <name type="scientific">Danio rerio</name>
    <name type="common">Zebrafish</name>
    <name type="synonym">Brachydanio rerio</name>
    <dbReference type="NCBI Taxonomy" id="7955"/>
    <lineage>
        <taxon>Eukaryota</taxon>
        <taxon>Metazoa</taxon>
        <taxon>Chordata</taxon>
        <taxon>Craniata</taxon>
        <taxon>Vertebrata</taxon>
        <taxon>Euteleostomi</taxon>
        <taxon>Actinopterygii</taxon>
        <taxon>Neopterygii</taxon>
        <taxon>Teleostei</taxon>
        <taxon>Ostariophysi</taxon>
        <taxon>Cypriniformes</taxon>
        <taxon>Danionidae</taxon>
        <taxon>Danioninae</taxon>
        <taxon>Danio</taxon>
    </lineage>
</organism>
<reference key="1">
    <citation type="journal article" date="1998" name="Science">
        <title>Zebrafish hox clusters and vertebrate genome evolution.</title>
        <authorList>
            <person name="Amores A."/>
            <person name="Force A."/>
            <person name="Yan Y.-L."/>
            <person name="Joly L."/>
            <person name="Amemiya C."/>
            <person name="Fritz A."/>
            <person name="Ho R.K."/>
            <person name="Langeland J."/>
            <person name="Prince V.E."/>
            <person name="Wang Y.-L."/>
            <person name="Westerfield M."/>
            <person name="Ekker M."/>
            <person name="Postlethwait J.H."/>
        </authorList>
    </citation>
    <scope>NUCLEOTIDE SEQUENCE [MRNA]</scope>
</reference>
<reference key="2">
    <citation type="journal article" date="2013" name="Nature">
        <title>The zebrafish reference genome sequence and its relationship to the human genome.</title>
        <authorList>
            <person name="Howe K."/>
            <person name="Clark M.D."/>
            <person name="Torroja C.F."/>
            <person name="Torrance J."/>
            <person name="Berthelot C."/>
            <person name="Muffato M."/>
            <person name="Collins J.E."/>
            <person name="Humphray S."/>
            <person name="McLaren K."/>
            <person name="Matthews L."/>
            <person name="McLaren S."/>
            <person name="Sealy I."/>
            <person name="Caccamo M."/>
            <person name="Churcher C."/>
            <person name="Scott C."/>
            <person name="Barrett J.C."/>
            <person name="Koch R."/>
            <person name="Rauch G.J."/>
            <person name="White S."/>
            <person name="Chow W."/>
            <person name="Kilian B."/>
            <person name="Quintais L.T."/>
            <person name="Guerra-Assuncao J.A."/>
            <person name="Zhou Y."/>
            <person name="Gu Y."/>
            <person name="Yen J."/>
            <person name="Vogel J.H."/>
            <person name="Eyre T."/>
            <person name="Redmond S."/>
            <person name="Banerjee R."/>
            <person name="Chi J."/>
            <person name="Fu B."/>
            <person name="Langley E."/>
            <person name="Maguire S.F."/>
            <person name="Laird G.K."/>
            <person name="Lloyd D."/>
            <person name="Kenyon E."/>
            <person name="Donaldson S."/>
            <person name="Sehra H."/>
            <person name="Almeida-King J."/>
            <person name="Loveland J."/>
            <person name="Trevanion S."/>
            <person name="Jones M."/>
            <person name="Quail M."/>
            <person name="Willey D."/>
            <person name="Hunt A."/>
            <person name="Burton J."/>
            <person name="Sims S."/>
            <person name="McLay K."/>
            <person name="Plumb B."/>
            <person name="Davis J."/>
            <person name="Clee C."/>
            <person name="Oliver K."/>
            <person name="Clark R."/>
            <person name="Riddle C."/>
            <person name="Elliot D."/>
            <person name="Threadgold G."/>
            <person name="Harden G."/>
            <person name="Ware D."/>
            <person name="Begum S."/>
            <person name="Mortimore B."/>
            <person name="Kerry G."/>
            <person name="Heath P."/>
            <person name="Phillimore B."/>
            <person name="Tracey A."/>
            <person name="Corby N."/>
            <person name="Dunn M."/>
            <person name="Johnson C."/>
            <person name="Wood J."/>
            <person name="Clark S."/>
            <person name="Pelan S."/>
            <person name="Griffiths G."/>
            <person name="Smith M."/>
            <person name="Glithero R."/>
            <person name="Howden P."/>
            <person name="Barker N."/>
            <person name="Lloyd C."/>
            <person name="Stevens C."/>
            <person name="Harley J."/>
            <person name="Holt K."/>
            <person name="Panagiotidis G."/>
            <person name="Lovell J."/>
            <person name="Beasley H."/>
            <person name="Henderson C."/>
            <person name="Gordon D."/>
            <person name="Auger K."/>
            <person name="Wright D."/>
            <person name="Collins J."/>
            <person name="Raisen C."/>
            <person name="Dyer L."/>
            <person name="Leung K."/>
            <person name="Robertson L."/>
            <person name="Ambridge K."/>
            <person name="Leongamornlert D."/>
            <person name="McGuire S."/>
            <person name="Gilderthorp R."/>
            <person name="Griffiths C."/>
            <person name="Manthravadi D."/>
            <person name="Nichol S."/>
            <person name="Barker G."/>
            <person name="Whitehead S."/>
            <person name="Kay M."/>
            <person name="Brown J."/>
            <person name="Murnane C."/>
            <person name="Gray E."/>
            <person name="Humphries M."/>
            <person name="Sycamore N."/>
            <person name="Barker D."/>
            <person name="Saunders D."/>
            <person name="Wallis J."/>
            <person name="Babbage A."/>
            <person name="Hammond S."/>
            <person name="Mashreghi-Mohammadi M."/>
            <person name="Barr L."/>
            <person name="Martin S."/>
            <person name="Wray P."/>
            <person name="Ellington A."/>
            <person name="Matthews N."/>
            <person name="Ellwood M."/>
            <person name="Woodmansey R."/>
            <person name="Clark G."/>
            <person name="Cooper J."/>
            <person name="Tromans A."/>
            <person name="Grafham D."/>
            <person name="Skuce C."/>
            <person name="Pandian R."/>
            <person name="Andrews R."/>
            <person name="Harrison E."/>
            <person name="Kimberley A."/>
            <person name="Garnett J."/>
            <person name="Fosker N."/>
            <person name="Hall R."/>
            <person name="Garner P."/>
            <person name="Kelly D."/>
            <person name="Bird C."/>
            <person name="Palmer S."/>
            <person name="Gehring I."/>
            <person name="Berger A."/>
            <person name="Dooley C.M."/>
            <person name="Ersan-Urun Z."/>
            <person name="Eser C."/>
            <person name="Geiger H."/>
            <person name="Geisler M."/>
            <person name="Karotki L."/>
            <person name="Kirn A."/>
            <person name="Konantz J."/>
            <person name="Konantz M."/>
            <person name="Oberlander M."/>
            <person name="Rudolph-Geiger S."/>
            <person name="Teucke M."/>
            <person name="Lanz C."/>
            <person name="Raddatz G."/>
            <person name="Osoegawa K."/>
            <person name="Zhu B."/>
            <person name="Rapp A."/>
            <person name="Widaa S."/>
            <person name="Langford C."/>
            <person name="Yang F."/>
            <person name="Schuster S.C."/>
            <person name="Carter N.P."/>
            <person name="Harrow J."/>
            <person name="Ning Z."/>
            <person name="Herrero J."/>
            <person name="Searle S.M."/>
            <person name="Enright A."/>
            <person name="Geisler R."/>
            <person name="Plasterk R.H."/>
            <person name="Lee C."/>
            <person name="Westerfield M."/>
            <person name="de Jong P.J."/>
            <person name="Zon L.I."/>
            <person name="Postlethwait J.H."/>
            <person name="Nusslein-Volhard C."/>
            <person name="Hubbard T.J."/>
            <person name="Roest Crollius H."/>
            <person name="Rogers J."/>
            <person name="Stemple D.L."/>
        </authorList>
    </citation>
    <scope>NUCLEOTIDE SEQUENCE [LARGE SCALE GENOMIC DNA]</scope>
    <source>
        <strain>Tuebingen</strain>
    </source>
</reference>
<reference key="3">
    <citation type="submission" date="2004-07" db="EMBL/GenBank/DDBJ databases">
        <authorList>
            <consortium name="NIH - Zebrafish Gene Collection (ZGC) project"/>
        </authorList>
    </citation>
    <scope>NUCLEOTIDE SEQUENCE [LARGE SCALE MRNA]</scope>
</reference>
<reference key="4">
    <citation type="journal article" date="2005" name="Evol. Dev.">
        <title>Genomic annotation and transcriptome analysis of the zebrafish (Danio rerio) hox complex with description of a novel member, hoxb13a.</title>
        <authorList>
            <person name="Corredor-Adamez M."/>
            <person name="Welten M.C.M."/>
            <person name="Spaink H.P."/>
            <person name="Jeffery J.E."/>
            <person name="Schoon R.T."/>
            <person name="de Bakker M.A.G."/>
            <person name="Bagowski C.P."/>
            <person name="Meijer A.H."/>
            <person name="Verbeek F.J."/>
            <person name="Richardson M.K."/>
        </authorList>
    </citation>
    <scope>NUCLEOTIDE SEQUENCE [MRNA] OF 65-154</scope>
    <source>
        <strain>Tuebingen</strain>
    </source>
</reference>
<protein>
    <recommendedName>
        <fullName>Homeobox protein Hox-A3a</fullName>
    </recommendedName>
</protein>
<gene>
    <name type="primary">hoxa3a</name>
    <name type="synonym">hoxa1a</name>
</gene>
<sequence length="410" mass="44107">MQKATYCDGSAIYSGLPYQSANGLGYDASQQQYLQALHAESEYHRPACSLQSPGISAGLHTSNEMSEVCQQINGTQATVTDTSDNKQPPTAPSGPSSPSSLNQIPNIDSAAKNPVHVSPTPSTRKHIFPWMKESRQNTKQKSCSIISVESCAGDKSPPGSAASKRARTAYTSAQLVELEKEFHFNRYLCRPRRVEMANLLNLTERQIKIWFQNRRMKYKKDQKGLGMMPSPGAQSPHSPVSLSSGGGGGGGSAYLSSMHSLVNSVTYDSPSPASYNKPQSNTYSLPTSYPPLNNCPPPQKRYQGTGTATPEYDTHHIQGNNNYGTQVQGSPVYVSGGGGYSDSLVGMGASVFGLTHLPHPSQGNIDYNGAITMGNSHQQGACDSNPCTFTDLTPHYSQGRIQEAPKLTHL</sequence>
<comment type="function">
    <text evidence="1">Sequence-specific transcription factor which is part of a developmental regulatory system that provides cells with specific positional identities on the anterior-posterior axis.</text>
</comment>
<comment type="subcellular location">
    <subcellularLocation>
        <location evidence="2">Nucleus</location>
    </subcellularLocation>
</comment>
<comment type="similarity">
    <text evidence="4">Belongs to the Antp homeobox family.</text>
</comment>
<name>HXA3A_DANRE</name>
<accession>Q8AWZ2</accession>
<accession>Q1L969</accession>
<accession>Q4PRB1</accession>
<accession>Q9YGT7</accession>
<keyword id="KW-0217">Developmental protein</keyword>
<keyword id="KW-0238">DNA-binding</keyword>
<keyword id="KW-0371">Homeobox</keyword>
<keyword id="KW-0539">Nucleus</keyword>
<keyword id="KW-1185">Reference proteome</keyword>
<keyword id="KW-0804">Transcription</keyword>
<keyword id="KW-0805">Transcription regulation</keyword>
<evidence type="ECO:0000250" key="1"/>
<evidence type="ECO:0000255" key="2">
    <source>
        <dbReference type="PROSITE-ProRule" id="PRU00108"/>
    </source>
</evidence>
<evidence type="ECO:0000256" key="3">
    <source>
        <dbReference type="SAM" id="MobiDB-lite"/>
    </source>
</evidence>
<evidence type="ECO:0000305" key="4"/>
<proteinExistence type="evidence at transcript level"/>
<dbReference type="EMBL" id="AF071245">
    <property type="protein sequence ID" value="AAD15938.1"/>
    <property type="molecule type" value="mRNA"/>
</dbReference>
<dbReference type="EMBL" id="AL645756">
    <property type="protein sequence ID" value="CAD52134.1"/>
    <property type="molecule type" value="Genomic_DNA"/>
</dbReference>
<dbReference type="EMBL" id="CR382300">
    <property type="protein sequence ID" value="CAK10851.1"/>
    <property type="molecule type" value="Genomic_DNA"/>
</dbReference>
<dbReference type="EMBL" id="BC076469">
    <property type="protein sequence ID" value="AAH76469.1"/>
    <property type="molecule type" value="mRNA"/>
</dbReference>
<dbReference type="EMBL" id="DQ060532">
    <property type="protein sequence ID" value="AAY67910.1"/>
    <property type="molecule type" value="mRNA"/>
</dbReference>
<dbReference type="RefSeq" id="NP_571609.2">
    <property type="nucleotide sequence ID" value="NM_131534.2"/>
</dbReference>
<dbReference type="RefSeq" id="XP_068071283.1">
    <property type="nucleotide sequence ID" value="XM_068215182.1"/>
</dbReference>
<dbReference type="RefSeq" id="XP_068071284.1">
    <property type="nucleotide sequence ID" value="XM_068215183.1"/>
</dbReference>
<dbReference type="RefSeq" id="XP_068071285.1">
    <property type="nucleotide sequence ID" value="XM_068215184.1"/>
</dbReference>
<dbReference type="RefSeq" id="XP_068071286.1">
    <property type="nucleotide sequence ID" value="XM_068215185.1"/>
</dbReference>
<dbReference type="RefSeq" id="XP_068071287.1">
    <property type="nucleotide sequence ID" value="XM_068215186.1"/>
</dbReference>
<dbReference type="SMR" id="Q8AWZ2"/>
<dbReference type="FunCoup" id="Q8AWZ2">
    <property type="interactions" value="1"/>
</dbReference>
<dbReference type="STRING" id="7955.ENSDARP00000139302"/>
<dbReference type="PaxDb" id="7955-ENSDARP00000117324"/>
<dbReference type="Ensembl" id="ENSDART00000163611">
    <property type="protein sequence ID" value="ENSDARP00000130226"/>
    <property type="gene ID" value="ENSDARG00000103862"/>
</dbReference>
<dbReference type="Ensembl" id="ENSDART00000170662">
    <property type="protein sequence ID" value="ENSDARP00000139302"/>
    <property type="gene ID" value="ENSDARG00000103862"/>
</dbReference>
<dbReference type="Ensembl" id="ENSDART00000182028">
    <property type="protein sequence ID" value="ENSDARP00000152861"/>
    <property type="gene ID" value="ENSDARG00000103862"/>
</dbReference>
<dbReference type="Ensembl" id="ENSDART00000187604">
    <property type="protein sequence ID" value="ENSDARP00000152675"/>
    <property type="gene ID" value="ENSDARG00000103862"/>
</dbReference>
<dbReference type="GeneID" id="58049"/>
<dbReference type="KEGG" id="dre:58049"/>
<dbReference type="AGR" id="ZFIN:ZDB-GENE-000823-3"/>
<dbReference type="CTD" id="58049"/>
<dbReference type="ZFIN" id="ZDB-GENE-000823-3">
    <property type="gene designation" value="hoxa3a"/>
</dbReference>
<dbReference type="eggNOG" id="KOG0489">
    <property type="taxonomic scope" value="Eukaryota"/>
</dbReference>
<dbReference type="HOGENOM" id="CLU_051508_1_0_1"/>
<dbReference type="InParanoid" id="Q8AWZ2"/>
<dbReference type="OMA" id="GEMAEGC"/>
<dbReference type="OrthoDB" id="6159439at2759"/>
<dbReference type="PhylomeDB" id="Q8AWZ2"/>
<dbReference type="TreeFam" id="TF315938"/>
<dbReference type="PRO" id="PR:Q8AWZ2"/>
<dbReference type="Proteomes" id="UP000000437">
    <property type="component" value="Chromosome 19"/>
</dbReference>
<dbReference type="Bgee" id="ENSDARG00000103862">
    <property type="expression patterns" value="Expressed in pharyngeal gill and 49 other cell types or tissues"/>
</dbReference>
<dbReference type="ExpressionAtlas" id="Q8AWZ2">
    <property type="expression patterns" value="baseline and differential"/>
</dbReference>
<dbReference type="GO" id="GO:0005634">
    <property type="term" value="C:nucleus"/>
    <property type="evidence" value="ECO:0000318"/>
    <property type="project" value="GO_Central"/>
</dbReference>
<dbReference type="GO" id="GO:0003677">
    <property type="term" value="F:DNA binding"/>
    <property type="evidence" value="ECO:0000314"/>
    <property type="project" value="ZFIN"/>
</dbReference>
<dbReference type="GO" id="GO:0000981">
    <property type="term" value="F:DNA-binding transcription factor activity, RNA polymerase II-specific"/>
    <property type="evidence" value="ECO:0000318"/>
    <property type="project" value="GO_Central"/>
</dbReference>
<dbReference type="GO" id="GO:0000978">
    <property type="term" value="F:RNA polymerase II cis-regulatory region sequence-specific DNA binding"/>
    <property type="evidence" value="ECO:0000318"/>
    <property type="project" value="GO_Central"/>
</dbReference>
<dbReference type="GO" id="GO:0009952">
    <property type="term" value="P:anterior/posterior pattern specification"/>
    <property type="evidence" value="ECO:0000318"/>
    <property type="project" value="GO_Central"/>
</dbReference>
<dbReference type="GO" id="GO:0048704">
    <property type="term" value="P:embryonic skeletal system morphogenesis"/>
    <property type="evidence" value="ECO:0000318"/>
    <property type="project" value="GO_Central"/>
</dbReference>
<dbReference type="GO" id="GO:0006357">
    <property type="term" value="P:regulation of transcription by RNA polymerase II"/>
    <property type="evidence" value="ECO:0000318"/>
    <property type="project" value="GO_Central"/>
</dbReference>
<dbReference type="CDD" id="cd00086">
    <property type="entry name" value="homeodomain"/>
    <property type="match status" value="1"/>
</dbReference>
<dbReference type="FunFam" id="1.10.10.60:FF:000094">
    <property type="entry name" value="Homeobox protein Hox-A3"/>
    <property type="match status" value="1"/>
</dbReference>
<dbReference type="Gene3D" id="1.10.10.60">
    <property type="entry name" value="Homeodomain-like"/>
    <property type="match status" value="1"/>
</dbReference>
<dbReference type="InterPro" id="IPR025281">
    <property type="entry name" value="DUF4074"/>
</dbReference>
<dbReference type="InterPro" id="IPR001356">
    <property type="entry name" value="HD"/>
</dbReference>
<dbReference type="InterPro" id="IPR020479">
    <property type="entry name" value="HD_metazoa"/>
</dbReference>
<dbReference type="InterPro" id="IPR001827">
    <property type="entry name" value="Homeobox_Antennapedia_CS"/>
</dbReference>
<dbReference type="InterPro" id="IPR017970">
    <property type="entry name" value="Homeobox_CS"/>
</dbReference>
<dbReference type="InterPro" id="IPR009057">
    <property type="entry name" value="Homeodomain-like_sf"/>
</dbReference>
<dbReference type="PANTHER" id="PTHR45664:SF13">
    <property type="entry name" value="HOMEOBOX PROTEIN HOX-A3"/>
    <property type="match status" value="1"/>
</dbReference>
<dbReference type="PANTHER" id="PTHR45664">
    <property type="entry name" value="PROTEIN ZERKNUELLT 1-RELATED"/>
    <property type="match status" value="1"/>
</dbReference>
<dbReference type="Pfam" id="PF13293">
    <property type="entry name" value="DUF4074"/>
    <property type="match status" value="1"/>
</dbReference>
<dbReference type="Pfam" id="PF00046">
    <property type="entry name" value="Homeodomain"/>
    <property type="match status" value="1"/>
</dbReference>
<dbReference type="PRINTS" id="PR00024">
    <property type="entry name" value="HOMEOBOX"/>
</dbReference>
<dbReference type="SMART" id="SM00389">
    <property type="entry name" value="HOX"/>
    <property type="match status" value="1"/>
</dbReference>
<dbReference type="SUPFAM" id="SSF46689">
    <property type="entry name" value="Homeodomain-like"/>
    <property type="match status" value="1"/>
</dbReference>
<dbReference type="PROSITE" id="PS00032">
    <property type="entry name" value="ANTENNAPEDIA"/>
    <property type="match status" value="1"/>
</dbReference>
<dbReference type="PROSITE" id="PS00027">
    <property type="entry name" value="HOMEOBOX_1"/>
    <property type="match status" value="1"/>
</dbReference>
<dbReference type="PROSITE" id="PS50071">
    <property type="entry name" value="HOMEOBOX_2"/>
    <property type="match status" value="1"/>
</dbReference>